<proteinExistence type="inferred from homology"/>
<reference key="1">
    <citation type="submission" date="2006-02" db="EMBL/GenBank/DDBJ databases">
        <title>Complete sequence of chromosome of Rhodoferax ferrireducens DSM 15236.</title>
        <authorList>
            <person name="Copeland A."/>
            <person name="Lucas S."/>
            <person name="Lapidus A."/>
            <person name="Barry K."/>
            <person name="Detter J.C."/>
            <person name="Glavina del Rio T."/>
            <person name="Hammon N."/>
            <person name="Israni S."/>
            <person name="Pitluck S."/>
            <person name="Brettin T."/>
            <person name="Bruce D."/>
            <person name="Han C."/>
            <person name="Tapia R."/>
            <person name="Gilna P."/>
            <person name="Kiss H."/>
            <person name="Schmutz J."/>
            <person name="Larimer F."/>
            <person name="Land M."/>
            <person name="Kyrpides N."/>
            <person name="Ivanova N."/>
            <person name="Richardson P."/>
        </authorList>
    </citation>
    <scope>NUCLEOTIDE SEQUENCE [LARGE SCALE GENOMIC DNA]</scope>
    <source>
        <strain>ATCC BAA-621 / DSM 15236 / T118</strain>
    </source>
</reference>
<sequence>MATGKEIRGKIKNFESTKKITKAMEMISVSKMRKAQERMRAARPYADKVRNIAANLGQANPEYIHAFMKTNEAPVVGMIVVTTDKGLCGGLNTNVLRSVTNKLRDLQSAGMSAQTVAIGNKGFGFLNRIGAKVVSHVTQLGDKPHLERLIGPVKVLLDAYARGEISAVYLSYTKFINTMKQEVVLEQLLPLSAARMQAETEASETASGAKHGWDYIYEPDAQSVIDDLLVRYVEALVYQSVAENMASEHAARMVAMKAATDNAGNVIGELKLVYNKTRQAAITKELSEIVSGAAAIGA</sequence>
<comment type="function">
    <text evidence="1">Produces ATP from ADP in the presence of a proton gradient across the membrane. The gamma chain is believed to be important in regulating ATPase activity and the flow of protons through the CF(0) complex.</text>
</comment>
<comment type="subunit">
    <text evidence="1">F-type ATPases have 2 components, CF(1) - the catalytic core - and CF(0) - the membrane proton channel. CF(1) has five subunits: alpha(3), beta(3), gamma(1), delta(1), epsilon(1). CF(0) has three main subunits: a, b and c.</text>
</comment>
<comment type="subcellular location">
    <subcellularLocation>
        <location evidence="1">Cell inner membrane</location>
        <topology evidence="1">Peripheral membrane protein</topology>
    </subcellularLocation>
</comment>
<comment type="similarity">
    <text evidence="1">Belongs to the ATPase gamma chain family.</text>
</comment>
<accession>Q223D5</accession>
<organism>
    <name type="scientific">Albidiferax ferrireducens (strain ATCC BAA-621 / DSM 15236 / T118)</name>
    <name type="common">Rhodoferax ferrireducens</name>
    <dbReference type="NCBI Taxonomy" id="338969"/>
    <lineage>
        <taxon>Bacteria</taxon>
        <taxon>Pseudomonadati</taxon>
        <taxon>Pseudomonadota</taxon>
        <taxon>Betaproteobacteria</taxon>
        <taxon>Burkholderiales</taxon>
        <taxon>Comamonadaceae</taxon>
        <taxon>Rhodoferax</taxon>
    </lineage>
</organism>
<dbReference type="EMBL" id="CP000267">
    <property type="protein sequence ID" value="ABD67868.1"/>
    <property type="molecule type" value="Genomic_DNA"/>
</dbReference>
<dbReference type="RefSeq" id="WP_011462441.1">
    <property type="nucleotide sequence ID" value="NC_007908.1"/>
</dbReference>
<dbReference type="SMR" id="Q223D5"/>
<dbReference type="STRING" id="338969.Rfer_0107"/>
<dbReference type="KEGG" id="rfr:Rfer_0107"/>
<dbReference type="eggNOG" id="COG0224">
    <property type="taxonomic scope" value="Bacteria"/>
</dbReference>
<dbReference type="HOGENOM" id="CLU_050669_0_1_4"/>
<dbReference type="OrthoDB" id="9812769at2"/>
<dbReference type="Proteomes" id="UP000008332">
    <property type="component" value="Chromosome"/>
</dbReference>
<dbReference type="GO" id="GO:0005886">
    <property type="term" value="C:plasma membrane"/>
    <property type="evidence" value="ECO:0007669"/>
    <property type="project" value="UniProtKB-SubCell"/>
</dbReference>
<dbReference type="GO" id="GO:0045259">
    <property type="term" value="C:proton-transporting ATP synthase complex"/>
    <property type="evidence" value="ECO:0007669"/>
    <property type="project" value="UniProtKB-KW"/>
</dbReference>
<dbReference type="GO" id="GO:0005524">
    <property type="term" value="F:ATP binding"/>
    <property type="evidence" value="ECO:0007669"/>
    <property type="project" value="UniProtKB-UniRule"/>
</dbReference>
<dbReference type="GO" id="GO:0046933">
    <property type="term" value="F:proton-transporting ATP synthase activity, rotational mechanism"/>
    <property type="evidence" value="ECO:0007669"/>
    <property type="project" value="UniProtKB-UniRule"/>
</dbReference>
<dbReference type="GO" id="GO:0042777">
    <property type="term" value="P:proton motive force-driven plasma membrane ATP synthesis"/>
    <property type="evidence" value="ECO:0007669"/>
    <property type="project" value="UniProtKB-UniRule"/>
</dbReference>
<dbReference type="CDD" id="cd12151">
    <property type="entry name" value="F1-ATPase_gamma"/>
    <property type="match status" value="1"/>
</dbReference>
<dbReference type="FunFam" id="1.10.287.80:FF:000005">
    <property type="entry name" value="ATP synthase gamma chain"/>
    <property type="match status" value="1"/>
</dbReference>
<dbReference type="Gene3D" id="3.40.1380.10">
    <property type="match status" value="1"/>
</dbReference>
<dbReference type="Gene3D" id="1.10.287.80">
    <property type="entry name" value="ATP synthase, gamma subunit, helix hairpin domain"/>
    <property type="match status" value="2"/>
</dbReference>
<dbReference type="HAMAP" id="MF_00815">
    <property type="entry name" value="ATP_synth_gamma_bact"/>
    <property type="match status" value="1"/>
</dbReference>
<dbReference type="InterPro" id="IPR035968">
    <property type="entry name" value="ATP_synth_F1_ATPase_gsu"/>
</dbReference>
<dbReference type="InterPro" id="IPR000131">
    <property type="entry name" value="ATP_synth_F1_gsu"/>
</dbReference>
<dbReference type="InterPro" id="IPR023632">
    <property type="entry name" value="ATP_synth_F1_gsu_CS"/>
</dbReference>
<dbReference type="NCBIfam" id="TIGR01146">
    <property type="entry name" value="ATPsyn_F1gamma"/>
    <property type="match status" value="1"/>
</dbReference>
<dbReference type="NCBIfam" id="NF004144">
    <property type="entry name" value="PRK05621.1-1"/>
    <property type="match status" value="1"/>
</dbReference>
<dbReference type="PANTHER" id="PTHR11693">
    <property type="entry name" value="ATP SYNTHASE GAMMA CHAIN"/>
    <property type="match status" value="1"/>
</dbReference>
<dbReference type="PANTHER" id="PTHR11693:SF22">
    <property type="entry name" value="ATP SYNTHASE SUBUNIT GAMMA, MITOCHONDRIAL"/>
    <property type="match status" value="1"/>
</dbReference>
<dbReference type="Pfam" id="PF00231">
    <property type="entry name" value="ATP-synt"/>
    <property type="match status" value="1"/>
</dbReference>
<dbReference type="PRINTS" id="PR00126">
    <property type="entry name" value="ATPASEGAMMA"/>
</dbReference>
<dbReference type="SUPFAM" id="SSF52943">
    <property type="entry name" value="ATP synthase (F1-ATPase), gamma subunit"/>
    <property type="match status" value="1"/>
</dbReference>
<dbReference type="PROSITE" id="PS00153">
    <property type="entry name" value="ATPASE_GAMMA"/>
    <property type="match status" value="1"/>
</dbReference>
<evidence type="ECO:0000255" key="1">
    <source>
        <dbReference type="HAMAP-Rule" id="MF_00815"/>
    </source>
</evidence>
<gene>
    <name evidence="1" type="primary">atpG</name>
    <name type="ordered locus">Rfer_0107</name>
</gene>
<protein>
    <recommendedName>
        <fullName evidence="1">ATP synthase gamma chain</fullName>
    </recommendedName>
    <alternativeName>
        <fullName evidence="1">ATP synthase F1 sector gamma subunit</fullName>
    </alternativeName>
    <alternativeName>
        <fullName evidence="1">F-ATPase gamma subunit</fullName>
    </alternativeName>
</protein>
<name>ATPG_ALBFT</name>
<feature type="chain" id="PRO_1000053303" description="ATP synthase gamma chain">
    <location>
        <begin position="1"/>
        <end position="298"/>
    </location>
</feature>
<keyword id="KW-0066">ATP synthesis</keyword>
<keyword id="KW-0997">Cell inner membrane</keyword>
<keyword id="KW-1003">Cell membrane</keyword>
<keyword id="KW-0139">CF(1)</keyword>
<keyword id="KW-0375">Hydrogen ion transport</keyword>
<keyword id="KW-0406">Ion transport</keyword>
<keyword id="KW-0472">Membrane</keyword>
<keyword id="KW-1185">Reference proteome</keyword>
<keyword id="KW-0813">Transport</keyword>